<dbReference type="EC" id="2.7.11.1"/>
<dbReference type="EMBL" id="AC004255">
    <property type="protein sequence ID" value="AAC13895.1"/>
    <property type="status" value="ALT_SEQ"/>
    <property type="molecule type" value="Genomic_DNA"/>
</dbReference>
<dbReference type="EMBL" id="CP002684">
    <property type="protein sequence ID" value="AEE33840.2"/>
    <property type="molecule type" value="Genomic_DNA"/>
</dbReference>
<dbReference type="EMBL" id="AK228765">
    <property type="protein sequence ID" value="BAF00665.1"/>
    <property type="status" value="ALT_SEQ"/>
    <property type="molecule type" value="mRNA"/>
</dbReference>
<dbReference type="RefSeq" id="NP_176341.3">
    <property type="nucleotide sequence ID" value="NM_104827.3"/>
</dbReference>
<dbReference type="SMR" id="O64774"/>
<dbReference type="FunCoup" id="O64774">
    <property type="interactions" value="1"/>
</dbReference>
<dbReference type="GlyGen" id="O64774">
    <property type="glycosylation" value="7 sites"/>
</dbReference>
<dbReference type="PaxDb" id="3702-AT1G61460.1"/>
<dbReference type="EnsemblPlants" id="AT1G61460.1">
    <property type="protein sequence ID" value="AT1G61460.1"/>
    <property type="gene ID" value="AT1G61460"/>
</dbReference>
<dbReference type="GeneID" id="842440"/>
<dbReference type="Gramene" id="AT1G61460.1">
    <property type="protein sequence ID" value="AT1G61460.1"/>
    <property type="gene ID" value="AT1G61460"/>
</dbReference>
<dbReference type="KEGG" id="ath:AT1G61460"/>
<dbReference type="Araport" id="AT1G61460"/>
<dbReference type="TAIR" id="AT1G61460"/>
<dbReference type="HOGENOM" id="CLU_000288_116_5_1"/>
<dbReference type="InParanoid" id="O64774"/>
<dbReference type="OMA" id="NENIFHP"/>
<dbReference type="PRO" id="PR:O64774"/>
<dbReference type="Proteomes" id="UP000006548">
    <property type="component" value="Chromosome 1"/>
</dbReference>
<dbReference type="ExpressionAtlas" id="O64774">
    <property type="expression patterns" value="baseline and differential"/>
</dbReference>
<dbReference type="GO" id="GO:0005886">
    <property type="term" value="C:plasma membrane"/>
    <property type="evidence" value="ECO:0007669"/>
    <property type="project" value="UniProtKB-SubCell"/>
</dbReference>
<dbReference type="GO" id="GO:0005524">
    <property type="term" value="F:ATP binding"/>
    <property type="evidence" value="ECO:0007669"/>
    <property type="project" value="UniProtKB-KW"/>
</dbReference>
<dbReference type="GO" id="GO:0005516">
    <property type="term" value="F:calmodulin binding"/>
    <property type="evidence" value="ECO:0000250"/>
    <property type="project" value="UniProtKB"/>
</dbReference>
<dbReference type="GO" id="GO:0030246">
    <property type="term" value="F:carbohydrate binding"/>
    <property type="evidence" value="ECO:0007669"/>
    <property type="project" value="UniProtKB-KW"/>
</dbReference>
<dbReference type="GO" id="GO:0106310">
    <property type="term" value="F:protein serine kinase activity"/>
    <property type="evidence" value="ECO:0007669"/>
    <property type="project" value="RHEA"/>
</dbReference>
<dbReference type="GO" id="GO:0004674">
    <property type="term" value="F:protein serine/threonine kinase activity"/>
    <property type="evidence" value="ECO:0000250"/>
    <property type="project" value="UniProtKB"/>
</dbReference>
<dbReference type="GO" id="GO:0031625">
    <property type="term" value="F:ubiquitin protein ligase binding"/>
    <property type="evidence" value="ECO:0007669"/>
    <property type="project" value="UniProtKB-ARBA"/>
</dbReference>
<dbReference type="GO" id="GO:0048544">
    <property type="term" value="P:recognition of pollen"/>
    <property type="evidence" value="ECO:0007669"/>
    <property type="project" value="InterPro"/>
</dbReference>
<dbReference type="CDD" id="cd00028">
    <property type="entry name" value="B_lectin"/>
    <property type="match status" value="1"/>
</dbReference>
<dbReference type="CDD" id="cd01098">
    <property type="entry name" value="PAN_AP_plant"/>
    <property type="match status" value="1"/>
</dbReference>
<dbReference type="FunFam" id="2.90.10.10:FF:000003">
    <property type="entry name" value="G-type lectin S-receptor-like serine/threonine-protein kinase"/>
    <property type="match status" value="1"/>
</dbReference>
<dbReference type="FunFam" id="1.10.510.10:FF:001019">
    <property type="entry name" value="G-type lectin S-receptor-like serine/threonine-protein kinase B120"/>
    <property type="match status" value="1"/>
</dbReference>
<dbReference type="FunFam" id="3.30.200.20:FF:000401">
    <property type="entry name" value="G-type lectin S-receptor-like serine/threonine-protein kinase SD1-29"/>
    <property type="match status" value="1"/>
</dbReference>
<dbReference type="Gene3D" id="2.90.10.10">
    <property type="entry name" value="Bulb-type lectin domain"/>
    <property type="match status" value="1"/>
</dbReference>
<dbReference type="Gene3D" id="3.30.200.20">
    <property type="entry name" value="Phosphorylase Kinase, domain 1"/>
    <property type="match status" value="1"/>
</dbReference>
<dbReference type="Gene3D" id="1.10.510.10">
    <property type="entry name" value="Transferase(Phosphotransferase) domain 1"/>
    <property type="match status" value="1"/>
</dbReference>
<dbReference type="InterPro" id="IPR001480">
    <property type="entry name" value="Bulb-type_lectin_dom"/>
</dbReference>
<dbReference type="InterPro" id="IPR036426">
    <property type="entry name" value="Bulb-type_lectin_dom_sf"/>
</dbReference>
<dbReference type="InterPro" id="IPR011009">
    <property type="entry name" value="Kinase-like_dom_sf"/>
</dbReference>
<dbReference type="InterPro" id="IPR003609">
    <property type="entry name" value="Pan_app"/>
</dbReference>
<dbReference type="InterPro" id="IPR000719">
    <property type="entry name" value="Prot_kinase_dom"/>
</dbReference>
<dbReference type="InterPro" id="IPR017441">
    <property type="entry name" value="Protein_kinase_ATP_BS"/>
</dbReference>
<dbReference type="InterPro" id="IPR021820">
    <property type="entry name" value="S-locus_recpt_kinase_C"/>
</dbReference>
<dbReference type="InterPro" id="IPR000858">
    <property type="entry name" value="S_locus_glycoprot_dom"/>
</dbReference>
<dbReference type="InterPro" id="IPR001245">
    <property type="entry name" value="Ser-Thr/Tyr_kinase_cat_dom"/>
</dbReference>
<dbReference type="InterPro" id="IPR008271">
    <property type="entry name" value="Ser/Thr_kinase_AS"/>
</dbReference>
<dbReference type="InterPro" id="IPR024171">
    <property type="entry name" value="SRK-like_kinase"/>
</dbReference>
<dbReference type="PANTHER" id="PTHR27002:SF506">
    <property type="entry name" value="ATP BINDING _ PROTEIN KINASE"/>
    <property type="match status" value="1"/>
</dbReference>
<dbReference type="PANTHER" id="PTHR27002">
    <property type="entry name" value="RECEPTOR-LIKE SERINE/THREONINE-PROTEIN KINASE SD1-8"/>
    <property type="match status" value="1"/>
</dbReference>
<dbReference type="Pfam" id="PF01453">
    <property type="entry name" value="B_lectin"/>
    <property type="match status" value="1"/>
</dbReference>
<dbReference type="Pfam" id="PF11883">
    <property type="entry name" value="DUF3403"/>
    <property type="match status" value="1"/>
</dbReference>
<dbReference type="Pfam" id="PF08276">
    <property type="entry name" value="PAN_2"/>
    <property type="match status" value="1"/>
</dbReference>
<dbReference type="Pfam" id="PF07714">
    <property type="entry name" value="PK_Tyr_Ser-Thr"/>
    <property type="match status" value="1"/>
</dbReference>
<dbReference type="Pfam" id="PF00954">
    <property type="entry name" value="S_locus_glycop"/>
    <property type="match status" value="1"/>
</dbReference>
<dbReference type="PIRSF" id="PIRSF000641">
    <property type="entry name" value="SRK"/>
    <property type="match status" value="1"/>
</dbReference>
<dbReference type="SMART" id="SM00108">
    <property type="entry name" value="B_lectin"/>
    <property type="match status" value="1"/>
</dbReference>
<dbReference type="SMART" id="SM00473">
    <property type="entry name" value="PAN_AP"/>
    <property type="match status" value="1"/>
</dbReference>
<dbReference type="SMART" id="SM00220">
    <property type="entry name" value="S_TKc"/>
    <property type="match status" value="1"/>
</dbReference>
<dbReference type="SUPFAM" id="SSF51110">
    <property type="entry name" value="alpha-D-mannose-specific plant lectins"/>
    <property type="match status" value="1"/>
</dbReference>
<dbReference type="SUPFAM" id="SSF56112">
    <property type="entry name" value="Protein kinase-like (PK-like)"/>
    <property type="match status" value="1"/>
</dbReference>
<dbReference type="PROSITE" id="PS50927">
    <property type="entry name" value="BULB_LECTIN"/>
    <property type="match status" value="1"/>
</dbReference>
<dbReference type="PROSITE" id="PS50948">
    <property type="entry name" value="PAN"/>
    <property type="match status" value="1"/>
</dbReference>
<dbReference type="PROSITE" id="PS00107">
    <property type="entry name" value="PROTEIN_KINASE_ATP"/>
    <property type="match status" value="1"/>
</dbReference>
<dbReference type="PROSITE" id="PS50011">
    <property type="entry name" value="PROTEIN_KINASE_DOM"/>
    <property type="match status" value="1"/>
</dbReference>
<dbReference type="PROSITE" id="PS00108">
    <property type="entry name" value="PROTEIN_KINASE_ST"/>
    <property type="match status" value="1"/>
</dbReference>
<feature type="signal peptide" evidence="2">
    <location>
        <begin position="1"/>
        <end position="25"/>
    </location>
</feature>
<feature type="chain" id="PRO_0000401313" description="G-type lectin S-receptor-like serine/threonine-protein kinase At1g61460">
    <location>
        <begin position="26"/>
        <end position="749"/>
    </location>
</feature>
<feature type="topological domain" description="Extracellular" evidence="2">
    <location>
        <begin position="26"/>
        <end position="392"/>
    </location>
</feature>
<feature type="transmembrane region" description="Helical" evidence="2">
    <location>
        <begin position="393"/>
        <end position="413"/>
    </location>
</feature>
<feature type="topological domain" description="Cytoplasmic" evidence="2">
    <location>
        <begin position="414"/>
        <end position="749"/>
    </location>
</feature>
<feature type="domain" description="Bulb-type lectin" evidence="3">
    <location>
        <begin position="26"/>
        <end position="145"/>
    </location>
</feature>
<feature type="domain" description="EGF-like; atypical">
    <location>
        <begin position="247"/>
        <end position="280"/>
    </location>
</feature>
<feature type="domain" description="PAN" evidence="5">
    <location>
        <begin position="299"/>
        <end position="381"/>
    </location>
</feature>
<feature type="domain" description="Protein kinase" evidence="4">
    <location>
        <begin position="454"/>
        <end position="721"/>
    </location>
</feature>
<feature type="region of interest" description="CaM-binding" evidence="1">
    <location>
        <begin position="543"/>
        <end position="560"/>
    </location>
</feature>
<feature type="active site" description="Proton acceptor" evidence="4 6">
    <location>
        <position position="579"/>
    </location>
</feature>
<feature type="binding site" evidence="4">
    <location>
        <begin position="460"/>
        <end position="468"/>
    </location>
    <ligand>
        <name>ATP</name>
        <dbReference type="ChEBI" id="CHEBI:30616"/>
    </ligand>
</feature>
<feature type="binding site" evidence="4">
    <location>
        <position position="482"/>
    </location>
    <ligand>
        <name>ATP</name>
        <dbReference type="ChEBI" id="CHEBI:30616"/>
    </ligand>
</feature>
<feature type="glycosylation site" description="N-linked (GlcNAc...) asparagine" evidence="2">
    <location>
        <position position="54"/>
    </location>
</feature>
<feature type="glycosylation site" description="N-linked (GlcNAc...) asparagine" evidence="2">
    <location>
        <position position="95"/>
    </location>
</feature>
<feature type="glycosylation site" description="N-linked (GlcNAc...) asparagine" evidence="2">
    <location>
        <position position="118"/>
    </location>
</feature>
<feature type="glycosylation site" description="N-linked (GlcNAc...) asparagine" evidence="2">
    <location>
        <position position="135"/>
    </location>
</feature>
<feature type="glycosylation site" description="N-linked (GlcNAc...) asparagine" evidence="2">
    <location>
        <position position="286"/>
    </location>
</feature>
<feature type="glycosylation site" description="N-linked (GlcNAc...) asparagine" evidence="2">
    <location>
        <position position="302"/>
    </location>
</feature>
<feature type="glycosylation site" description="N-linked (GlcNAc...) asparagine" evidence="2">
    <location>
        <position position="341"/>
    </location>
</feature>
<feature type="disulfide bond" evidence="1">
    <location>
        <begin position="251"/>
        <end position="263"/>
    </location>
</feature>
<feature type="disulfide bond" evidence="1">
    <location>
        <begin position="257"/>
        <end position="268"/>
    </location>
</feature>
<feature type="disulfide bond" evidence="1">
    <location>
        <begin position="334"/>
        <end position="355"/>
    </location>
</feature>
<feature type="disulfide bond" evidence="1">
    <location>
        <begin position="338"/>
        <end position="344"/>
    </location>
</feature>
<feature type="sequence conflict" description="In Ref. 3; BAF00665." evidence="7" ref="3">
    <original>K</original>
    <variation>E</variation>
    <location>
        <position position="472"/>
    </location>
</feature>
<evidence type="ECO:0000250" key="1"/>
<evidence type="ECO:0000255" key="2"/>
<evidence type="ECO:0000255" key="3">
    <source>
        <dbReference type="PROSITE-ProRule" id="PRU00038"/>
    </source>
</evidence>
<evidence type="ECO:0000255" key="4">
    <source>
        <dbReference type="PROSITE-ProRule" id="PRU00159"/>
    </source>
</evidence>
<evidence type="ECO:0000255" key="5">
    <source>
        <dbReference type="PROSITE-ProRule" id="PRU00315"/>
    </source>
</evidence>
<evidence type="ECO:0000255" key="6">
    <source>
        <dbReference type="PROSITE-ProRule" id="PRU10027"/>
    </source>
</evidence>
<evidence type="ECO:0000305" key="7"/>
<sequence>MRITFFASLLLFTNTIFISFSFAIAGINKESPLSIGQTLSSSNGVYELGFFSFNNSENHYLGIWFKGIIPRVVVWVANRENPVTDSTANLAISSNASLLLYNGKHGVAWSSGETLASNGSRAELSDTGNLIVIDNFSGRTLWQSFDHLGDTMLPFSALMYNLATGEKQVLTSWKSYTNPAVGDFVLQITTQVPTQALTMRGSKPYWRSGPWAKTRNFKLPRIVITSKGSLEISRHSGTDWVLNFVAPAHSCDYYGVCGPFGICVKSVCKCFKGFIPKYIEEWKRGNWTDGCVRRTKLHCQENSTKKDANFFHPVANIKPPDFYEFASAVDAEGCYKICLHNCSCLAFSYIHGIGCLIWNQDFMDTVQFSAGGEILSIRLARSELGGNKRKKTITASIVSLSLFLILGSTAFGFWRYRVKHNASQDAPKYDLEPQDVSGSYLFEMNTIQTATNNFSLSNKLGQGGFGSVYKGKLQDGKEIAVKRLSSSSGQGKEEFMNEIVLISKLQHKNLVRILGCCIEGEERLLIYEFMLNKSLDTFLFDSRKRLEIDWPKRFDIIQGIARGIHYLHRDSCLKVIHRDLKVSNILLDEKMNPKISDFGLARMYQGTEYQDNTRRVVGTLGYMSPEDILEIISGEKISRFSYGKEEKTLIAYAWESWCETGGVDLLDKDVADSCRPLEVERCIQIGLLCVQHQPADRPNTLELMSMLTTTSDLPSPKQPTFVVHWRDDESSSKDLITVNEMTKSVILGR</sequence>
<gene>
    <name type="ordered locus">At1g61460</name>
    <name type="ORF">T1F9.5</name>
</gene>
<reference key="1">
    <citation type="journal article" date="2000" name="Nature">
        <title>Sequence and analysis of chromosome 1 of the plant Arabidopsis thaliana.</title>
        <authorList>
            <person name="Theologis A."/>
            <person name="Ecker J.R."/>
            <person name="Palm C.J."/>
            <person name="Federspiel N.A."/>
            <person name="Kaul S."/>
            <person name="White O."/>
            <person name="Alonso J."/>
            <person name="Altafi H."/>
            <person name="Araujo R."/>
            <person name="Bowman C.L."/>
            <person name="Brooks S.Y."/>
            <person name="Buehler E."/>
            <person name="Chan A."/>
            <person name="Chao Q."/>
            <person name="Chen H."/>
            <person name="Cheuk R.F."/>
            <person name="Chin C.W."/>
            <person name="Chung M.K."/>
            <person name="Conn L."/>
            <person name="Conway A.B."/>
            <person name="Conway A.R."/>
            <person name="Creasy T.H."/>
            <person name="Dewar K."/>
            <person name="Dunn P."/>
            <person name="Etgu P."/>
            <person name="Feldblyum T.V."/>
            <person name="Feng J.-D."/>
            <person name="Fong B."/>
            <person name="Fujii C.Y."/>
            <person name="Gill J.E."/>
            <person name="Goldsmith A.D."/>
            <person name="Haas B."/>
            <person name="Hansen N.F."/>
            <person name="Hughes B."/>
            <person name="Huizar L."/>
            <person name="Hunter J.L."/>
            <person name="Jenkins J."/>
            <person name="Johnson-Hopson C."/>
            <person name="Khan S."/>
            <person name="Khaykin E."/>
            <person name="Kim C.J."/>
            <person name="Koo H.L."/>
            <person name="Kremenetskaia I."/>
            <person name="Kurtz D.B."/>
            <person name="Kwan A."/>
            <person name="Lam B."/>
            <person name="Langin-Hooper S."/>
            <person name="Lee A."/>
            <person name="Lee J.M."/>
            <person name="Lenz C.A."/>
            <person name="Li J.H."/>
            <person name="Li Y.-P."/>
            <person name="Lin X."/>
            <person name="Liu S.X."/>
            <person name="Liu Z.A."/>
            <person name="Luros J.S."/>
            <person name="Maiti R."/>
            <person name="Marziali A."/>
            <person name="Militscher J."/>
            <person name="Miranda M."/>
            <person name="Nguyen M."/>
            <person name="Nierman W.C."/>
            <person name="Osborne B.I."/>
            <person name="Pai G."/>
            <person name="Peterson J."/>
            <person name="Pham P.K."/>
            <person name="Rizzo M."/>
            <person name="Rooney T."/>
            <person name="Rowley D."/>
            <person name="Sakano H."/>
            <person name="Salzberg S.L."/>
            <person name="Schwartz J.R."/>
            <person name="Shinn P."/>
            <person name="Southwick A.M."/>
            <person name="Sun H."/>
            <person name="Tallon L.J."/>
            <person name="Tambunga G."/>
            <person name="Toriumi M.J."/>
            <person name="Town C.D."/>
            <person name="Utterback T."/>
            <person name="Van Aken S."/>
            <person name="Vaysberg M."/>
            <person name="Vysotskaia V.S."/>
            <person name="Walker M."/>
            <person name="Wu D."/>
            <person name="Yu G."/>
            <person name="Fraser C.M."/>
            <person name="Venter J.C."/>
            <person name="Davis R.W."/>
        </authorList>
    </citation>
    <scope>NUCLEOTIDE SEQUENCE [LARGE SCALE GENOMIC DNA]</scope>
    <source>
        <strain>cv. Columbia</strain>
    </source>
</reference>
<reference key="2">
    <citation type="journal article" date="2017" name="Plant J.">
        <title>Araport11: a complete reannotation of the Arabidopsis thaliana reference genome.</title>
        <authorList>
            <person name="Cheng C.Y."/>
            <person name="Krishnakumar V."/>
            <person name="Chan A.P."/>
            <person name="Thibaud-Nissen F."/>
            <person name="Schobel S."/>
            <person name="Town C.D."/>
        </authorList>
    </citation>
    <scope>GENOME REANNOTATION</scope>
    <source>
        <strain>cv. Columbia</strain>
    </source>
</reference>
<reference key="3">
    <citation type="submission" date="2006-07" db="EMBL/GenBank/DDBJ databases">
        <title>Large-scale analysis of RIKEN Arabidopsis full-length (RAFL) cDNAs.</title>
        <authorList>
            <person name="Totoki Y."/>
            <person name="Seki M."/>
            <person name="Ishida J."/>
            <person name="Nakajima M."/>
            <person name="Enju A."/>
            <person name="Kamiya A."/>
            <person name="Narusaka M."/>
            <person name="Shin-i T."/>
            <person name="Nakagawa M."/>
            <person name="Sakamoto N."/>
            <person name="Oishi K."/>
            <person name="Kohara Y."/>
            <person name="Kobayashi M."/>
            <person name="Toyoda A."/>
            <person name="Sakaki Y."/>
            <person name="Sakurai T."/>
            <person name="Iida K."/>
            <person name="Akiyama K."/>
            <person name="Satou M."/>
            <person name="Toyoda T."/>
            <person name="Konagaya A."/>
            <person name="Carninci P."/>
            <person name="Kawai J."/>
            <person name="Hayashizaki Y."/>
            <person name="Shinozaki K."/>
        </authorList>
    </citation>
    <scope>NUCLEOTIDE SEQUENCE [LARGE SCALE MRNA]</scope>
    <source>
        <strain>cv. Columbia</strain>
    </source>
</reference>
<name>Y1146_ARATH</name>
<protein>
    <recommendedName>
        <fullName>G-type lectin S-receptor-like serine/threonine-protein kinase At1g61460</fullName>
        <ecNumber>2.7.11.1</ecNumber>
    </recommendedName>
</protein>
<accession>O64774</accession>
<accession>F4HTL5</accession>
<accession>Q0WQD4</accession>
<comment type="catalytic activity">
    <reaction>
        <text>L-seryl-[protein] + ATP = O-phospho-L-seryl-[protein] + ADP + H(+)</text>
        <dbReference type="Rhea" id="RHEA:17989"/>
        <dbReference type="Rhea" id="RHEA-COMP:9863"/>
        <dbReference type="Rhea" id="RHEA-COMP:11604"/>
        <dbReference type="ChEBI" id="CHEBI:15378"/>
        <dbReference type="ChEBI" id="CHEBI:29999"/>
        <dbReference type="ChEBI" id="CHEBI:30616"/>
        <dbReference type="ChEBI" id="CHEBI:83421"/>
        <dbReference type="ChEBI" id="CHEBI:456216"/>
        <dbReference type="EC" id="2.7.11.1"/>
    </reaction>
</comment>
<comment type="catalytic activity">
    <reaction>
        <text>L-threonyl-[protein] + ATP = O-phospho-L-threonyl-[protein] + ADP + H(+)</text>
        <dbReference type="Rhea" id="RHEA:46608"/>
        <dbReference type="Rhea" id="RHEA-COMP:11060"/>
        <dbReference type="Rhea" id="RHEA-COMP:11605"/>
        <dbReference type="ChEBI" id="CHEBI:15378"/>
        <dbReference type="ChEBI" id="CHEBI:30013"/>
        <dbReference type="ChEBI" id="CHEBI:30616"/>
        <dbReference type="ChEBI" id="CHEBI:61977"/>
        <dbReference type="ChEBI" id="CHEBI:456216"/>
        <dbReference type="EC" id="2.7.11.1"/>
    </reaction>
</comment>
<comment type="subcellular location">
    <subcellularLocation>
        <location evidence="1">Cell membrane</location>
        <topology evidence="1">Single-pass type I membrane protein</topology>
    </subcellularLocation>
</comment>
<comment type="similarity">
    <text evidence="4">Belongs to the protein kinase superfamily. Ser/Thr protein kinase family.</text>
</comment>
<comment type="sequence caution" evidence="7">
    <conflict type="erroneous gene model prediction">
        <sequence resource="EMBL-CDS" id="AAC13895"/>
    </conflict>
</comment>
<comment type="sequence caution" evidence="7">
    <conflict type="miscellaneous discrepancy">
        <sequence resource="EMBL-CDS" id="BAF00665"/>
    </conflict>
    <text>Intron retention.</text>
</comment>
<proteinExistence type="evidence at transcript level"/>
<organism>
    <name type="scientific">Arabidopsis thaliana</name>
    <name type="common">Mouse-ear cress</name>
    <dbReference type="NCBI Taxonomy" id="3702"/>
    <lineage>
        <taxon>Eukaryota</taxon>
        <taxon>Viridiplantae</taxon>
        <taxon>Streptophyta</taxon>
        <taxon>Embryophyta</taxon>
        <taxon>Tracheophyta</taxon>
        <taxon>Spermatophyta</taxon>
        <taxon>Magnoliopsida</taxon>
        <taxon>eudicotyledons</taxon>
        <taxon>Gunneridae</taxon>
        <taxon>Pentapetalae</taxon>
        <taxon>rosids</taxon>
        <taxon>malvids</taxon>
        <taxon>Brassicales</taxon>
        <taxon>Brassicaceae</taxon>
        <taxon>Camelineae</taxon>
        <taxon>Arabidopsis</taxon>
    </lineage>
</organism>
<keyword id="KW-0067">ATP-binding</keyword>
<keyword id="KW-1003">Cell membrane</keyword>
<keyword id="KW-1015">Disulfide bond</keyword>
<keyword id="KW-0245">EGF-like domain</keyword>
<keyword id="KW-0325">Glycoprotein</keyword>
<keyword id="KW-0418">Kinase</keyword>
<keyword id="KW-0430">Lectin</keyword>
<keyword id="KW-0472">Membrane</keyword>
<keyword id="KW-0547">Nucleotide-binding</keyword>
<keyword id="KW-0675">Receptor</keyword>
<keyword id="KW-1185">Reference proteome</keyword>
<keyword id="KW-0723">Serine/threonine-protein kinase</keyword>
<keyword id="KW-0732">Signal</keyword>
<keyword id="KW-0808">Transferase</keyword>
<keyword id="KW-0812">Transmembrane</keyword>
<keyword id="KW-1133">Transmembrane helix</keyword>